<comment type="function">
    <text>Probably participates in a plant defense mechanism. Has hemolytic activity.</text>
</comment>
<comment type="domain">
    <text evidence="1">The presence of a 'disulfide through disulfide knot' structurally defines this protein as a knottin.</text>
</comment>
<comment type="PTM">
    <text>Kalata-B7 is a cyclic peptide.</text>
</comment>
<comment type="mass spectrometry" mass="3071.6" method="Electrospray" evidence="4"/>
<comment type="similarity">
    <text evidence="3">Belongs to the cyclotide family. Moebius subfamily.</text>
</comment>
<gene>
    <name type="primary">OAK3</name>
</gene>
<keyword id="KW-0002">3D-structure</keyword>
<keyword id="KW-0204">Cytolysis</keyword>
<keyword id="KW-0903">Direct protein sequencing</keyword>
<keyword id="KW-1015">Disulfide bond</keyword>
<keyword id="KW-0354">Hemolysis</keyword>
<keyword id="KW-0960">Knottin</keyword>
<keyword id="KW-0611">Plant defense</keyword>
<keyword id="KW-0732">Signal</keyword>
<accession>P58457</accession>
<proteinExistence type="evidence at protein level"/>
<organism>
    <name type="scientific">Oldenlandia affinis</name>
    <dbReference type="NCBI Taxonomy" id="60225"/>
    <lineage>
        <taxon>Eukaryota</taxon>
        <taxon>Viridiplantae</taxon>
        <taxon>Streptophyta</taxon>
        <taxon>Embryophyta</taxon>
        <taxon>Tracheophyta</taxon>
        <taxon>Spermatophyta</taxon>
        <taxon>Magnoliopsida</taxon>
        <taxon>eudicotyledons</taxon>
        <taxon>Gunneridae</taxon>
        <taxon>Pentapetalae</taxon>
        <taxon>asterids</taxon>
        <taxon>lamiids</taxon>
        <taxon>Gentianales</taxon>
        <taxon>Rubiaceae</taxon>
        <taxon>Rubioideae</taxon>
        <taxon>Spermacoceae</taxon>
        <taxon>Hedyotis-Oldenlandia complex</taxon>
        <taxon>Oldenlandia</taxon>
    </lineage>
</organism>
<feature type="signal peptide" evidence="2">
    <location>
        <begin position="1"/>
        <end position="28"/>
    </location>
</feature>
<feature type="propeptide" id="PRO_0000006632" evidence="4">
    <location>
        <begin position="29"/>
        <end position="75"/>
    </location>
</feature>
<feature type="peptide" id="PRO_0000006633" description="Kalata-B7">
    <location>
        <begin position="76"/>
        <end position="104"/>
    </location>
</feature>
<feature type="propeptide" id="PRO_0000006634">
    <location>
        <begin position="105"/>
        <end position="111"/>
    </location>
</feature>
<feature type="disulfide bond" evidence="3">
    <location>
        <begin position="80"/>
        <end position="94"/>
    </location>
</feature>
<feature type="disulfide bond" evidence="3">
    <location>
        <begin position="84"/>
        <end position="96"/>
    </location>
</feature>
<feature type="disulfide bond" evidence="3">
    <location>
        <begin position="89"/>
        <end position="101"/>
    </location>
</feature>
<feature type="cross-link" description="Cyclopeptide (Gly-Asn)">
    <location>
        <begin position="76"/>
        <end position="104"/>
    </location>
</feature>
<feature type="strand" evidence="7">
    <location>
        <begin position="75"/>
        <end position="78"/>
    </location>
</feature>
<feature type="strand" evidence="6">
    <location>
        <begin position="85"/>
        <end position="87"/>
    </location>
</feature>
<feature type="strand" evidence="7">
    <location>
        <begin position="90"/>
        <end position="93"/>
    </location>
</feature>
<feature type="strand" evidence="5">
    <location>
        <begin position="95"/>
        <end position="97"/>
    </location>
</feature>
<feature type="strand" evidence="5">
    <location>
        <begin position="100"/>
        <end position="105"/>
    </location>
</feature>
<name>KAB7_OLDAF</name>
<dbReference type="EMBL" id="AF393827">
    <property type="protein sequence ID" value="AAL05479.1"/>
    <property type="molecule type" value="mRNA"/>
</dbReference>
<dbReference type="PDB" id="2JWM">
    <property type="method" value="NMR"/>
    <property type="chains" value="A=80-109"/>
</dbReference>
<dbReference type="PDB" id="2M9O">
    <property type="method" value="NMR"/>
    <property type="chains" value="A=76-104"/>
</dbReference>
<dbReference type="PDB" id="2MW0">
    <property type="method" value="NMR"/>
    <property type="chains" value="A=76-96"/>
</dbReference>
<dbReference type="PDBsum" id="2JWM"/>
<dbReference type="PDBsum" id="2M9O"/>
<dbReference type="PDBsum" id="2MW0"/>
<dbReference type="BMRB" id="P58457"/>
<dbReference type="SMR" id="P58457"/>
<dbReference type="EvolutionaryTrace" id="P58457"/>
<dbReference type="GO" id="GO:0006952">
    <property type="term" value="P:defense response"/>
    <property type="evidence" value="ECO:0007669"/>
    <property type="project" value="UniProtKB-KW"/>
</dbReference>
<dbReference type="GO" id="GO:0031640">
    <property type="term" value="P:killing of cells of another organism"/>
    <property type="evidence" value="ECO:0007669"/>
    <property type="project" value="UniProtKB-KW"/>
</dbReference>
<dbReference type="InterPro" id="IPR005535">
    <property type="entry name" value="Cyclotide"/>
</dbReference>
<dbReference type="InterPro" id="IPR012324">
    <property type="entry name" value="Cyclotide_moebius_CS"/>
</dbReference>
<dbReference type="InterPro" id="IPR036146">
    <property type="entry name" value="Cyclotide_sf"/>
</dbReference>
<dbReference type="Pfam" id="PF03784">
    <property type="entry name" value="Cyclotide"/>
    <property type="match status" value="1"/>
</dbReference>
<dbReference type="SUPFAM" id="SSF57038">
    <property type="entry name" value="Cyclotides"/>
    <property type="match status" value="1"/>
</dbReference>
<dbReference type="PROSITE" id="PS51052">
    <property type="entry name" value="CYCLOTIDE"/>
    <property type="match status" value="1"/>
</dbReference>
<dbReference type="PROSITE" id="PS60009">
    <property type="entry name" value="CYCLOTIDE_MOEBIUS"/>
    <property type="match status" value="1"/>
</dbReference>
<evidence type="ECO:0000250" key="1"/>
<evidence type="ECO:0000255" key="2"/>
<evidence type="ECO:0000255" key="3">
    <source>
        <dbReference type="PROSITE-ProRule" id="PRU00395"/>
    </source>
</evidence>
<evidence type="ECO:0000269" key="4">
    <source>
    </source>
</evidence>
<evidence type="ECO:0007829" key="5">
    <source>
        <dbReference type="PDB" id="2JWM"/>
    </source>
</evidence>
<evidence type="ECO:0007829" key="6">
    <source>
        <dbReference type="PDB" id="2M9O"/>
    </source>
</evidence>
<evidence type="ECO:0007829" key="7">
    <source>
        <dbReference type="PDB" id="2MW0"/>
    </source>
</evidence>
<sequence length="111" mass="11959">MAKFTNCLALCLLLAAVVGAFGVELSEADKSAVVNEIAEKMALQEMLDGVDKLFLRKMKSSETTLTMFLKEMQLKGLPVCGETCTLGTCYTQGCTCSWPICKRNGLPDVAA</sequence>
<reference key="1">
    <citation type="journal article" date="2001" name="Proc. Natl. Acad. Sci. U.S.A.">
        <title>Biosynthesis and insecticidal properties of plant cyclotides: the cyclic knotted proteins from Oldenlandia affinis.</title>
        <authorList>
            <person name="Jennings C.V."/>
            <person name="West J."/>
            <person name="Waine C."/>
            <person name="Craik D.J."/>
            <person name="Anderson M.A."/>
        </authorList>
    </citation>
    <scope>NUCLEOTIDE SEQUENCE [MRNA]</scope>
</reference>
<reference key="2">
    <citation type="journal article" date="2007" name="ChemBioChem">
        <title>The cyclotide fingerprint in Oldenlandia affinis: elucidation of chemically modified, linear and novel macrocyclic peptides.</title>
        <authorList>
            <person name="Plan M.R.R."/>
            <person name="Goeransson U."/>
            <person name="Clark R.J."/>
            <person name="Daly N.L."/>
            <person name="Colgrave M.L."/>
            <person name="Craik D.J."/>
        </authorList>
    </citation>
    <scope>PROTEIN SEQUENCE OF 76-104</scope>
    <scope>MASS SPECTROMETRY</scope>
</reference>
<protein>
    <recommendedName>
        <fullName>Kalata-B7</fullName>
    </recommendedName>
</protein>